<accession>P73469</accession>
<protein>
    <recommendedName>
        <fullName>Serine/threonine-protein kinase F</fullName>
        <ecNumber>2.7.11.1</ecNumber>
    </recommendedName>
</protein>
<evidence type="ECO:0000255" key="1">
    <source>
        <dbReference type="PROSITE-ProRule" id="PRU00159"/>
    </source>
</evidence>
<evidence type="ECO:0000256" key="2">
    <source>
        <dbReference type="SAM" id="MobiDB-lite"/>
    </source>
</evidence>
<comment type="catalytic activity">
    <reaction>
        <text>L-seryl-[protein] + ATP = O-phospho-L-seryl-[protein] + ADP + H(+)</text>
        <dbReference type="Rhea" id="RHEA:17989"/>
        <dbReference type="Rhea" id="RHEA-COMP:9863"/>
        <dbReference type="Rhea" id="RHEA-COMP:11604"/>
        <dbReference type="ChEBI" id="CHEBI:15378"/>
        <dbReference type="ChEBI" id="CHEBI:29999"/>
        <dbReference type="ChEBI" id="CHEBI:30616"/>
        <dbReference type="ChEBI" id="CHEBI:83421"/>
        <dbReference type="ChEBI" id="CHEBI:456216"/>
        <dbReference type="EC" id="2.7.11.1"/>
    </reaction>
</comment>
<comment type="catalytic activity">
    <reaction>
        <text>L-threonyl-[protein] + ATP = O-phospho-L-threonyl-[protein] + ADP + H(+)</text>
        <dbReference type="Rhea" id="RHEA:46608"/>
        <dbReference type="Rhea" id="RHEA-COMP:11060"/>
        <dbReference type="Rhea" id="RHEA-COMP:11605"/>
        <dbReference type="ChEBI" id="CHEBI:15378"/>
        <dbReference type="ChEBI" id="CHEBI:30013"/>
        <dbReference type="ChEBI" id="CHEBI:30616"/>
        <dbReference type="ChEBI" id="CHEBI:61977"/>
        <dbReference type="ChEBI" id="CHEBI:456216"/>
        <dbReference type="EC" id="2.7.11.1"/>
    </reaction>
</comment>
<comment type="similarity">
    <text evidence="1">Belongs to the protein kinase superfamily. Ser/Thr protein kinase family.</text>
</comment>
<name>SPKF_SYNY3</name>
<dbReference type="EC" id="2.7.11.1"/>
<dbReference type="EMBL" id="AB046601">
    <property type="protein sequence ID" value="BAB17037.1"/>
    <property type="molecule type" value="Genomic_DNA"/>
</dbReference>
<dbReference type="EMBL" id="BA000022">
    <property type="protein sequence ID" value="BAA17509.1"/>
    <property type="molecule type" value="Genomic_DNA"/>
</dbReference>
<dbReference type="PIR" id="S77406">
    <property type="entry name" value="S77406"/>
</dbReference>
<dbReference type="SMR" id="P73469"/>
<dbReference type="FunCoup" id="P73469">
    <property type="interactions" value="34"/>
</dbReference>
<dbReference type="IntAct" id="P73469">
    <property type="interactions" value="2"/>
</dbReference>
<dbReference type="STRING" id="1148.gene:10498374"/>
<dbReference type="PaxDb" id="1148-1652588"/>
<dbReference type="EnsemblBacteria" id="BAA17509">
    <property type="protein sequence ID" value="BAA17509"/>
    <property type="gene ID" value="BAA17509"/>
</dbReference>
<dbReference type="KEGG" id="syn:slr1225"/>
<dbReference type="eggNOG" id="COG0515">
    <property type="taxonomic scope" value="Bacteria"/>
</dbReference>
<dbReference type="InParanoid" id="P73469"/>
<dbReference type="PhylomeDB" id="P73469"/>
<dbReference type="Proteomes" id="UP000001425">
    <property type="component" value="Chromosome"/>
</dbReference>
<dbReference type="GO" id="GO:0005737">
    <property type="term" value="C:cytoplasm"/>
    <property type="evidence" value="ECO:0000318"/>
    <property type="project" value="GO_Central"/>
</dbReference>
<dbReference type="GO" id="GO:0005524">
    <property type="term" value="F:ATP binding"/>
    <property type="evidence" value="ECO:0007669"/>
    <property type="project" value="UniProtKB-KW"/>
</dbReference>
<dbReference type="GO" id="GO:0106310">
    <property type="term" value="F:protein serine kinase activity"/>
    <property type="evidence" value="ECO:0007669"/>
    <property type="project" value="RHEA"/>
</dbReference>
<dbReference type="GO" id="GO:0004674">
    <property type="term" value="F:protein serine/threonine kinase activity"/>
    <property type="evidence" value="ECO:0000318"/>
    <property type="project" value="GO_Central"/>
</dbReference>
<dbReference type="CDD" id="cd14014">
    <property type="entry name" value="STKc_PknB_like"/>
    <property type="match status" value="1"/>
</dbReference>
<dbReference type="Gene3D" id="3.30.200.20">
    <property type="entry name" value="Phosphorylase Kinase, domain 1"/>
    <property type="match status" value="1"/>
</dbReference>
<dbReference type="Gene3D" id="1.10.510.10">
    <property type="entry name" value="Transferase(Phosphotransferase) domain 1"/>
    <property type="match status" value="1"/>
</dbReference>
<dbReference type="InterPro" id="IPR011009">
    <property type="entry name" value="Kinase-like_dom_sf"/>
</dbReference>
<dbReference type="InterPro" id="IPR000719">
    <property type="entry name" value="Prot_kinase_dom"/>
</dbReference>
<dbReference type="InterPro" id="IPR017441">
    <property type="entry name" value="Protein_kinase_ATP_BS"/>
</dbReference>
<dbReference type="NCBIfam" id="NF045510">
    <property type="entry name" value="4Cys_prefix_kin"/>
    <property type="match status" value="1"/>
</dbReference>
<dbReference type="PANTHER" id="PTHR24363">
    <property type="entry name" value="SERINE/THREONINE PROTEIN KINASE"/>
    <property type="match status" value="1"/>
</dbReference>
<dbReference type="PANTHER" id="PTHR24363:SF0">
    <property type="entry name" value="SERINE_THREONINE KINASE LIKE DOMAIN CONTAINING 1"/>
    <property type="match status" value="1"/>
</dbReference>
<dbReference type="Pfam" id="PF00069">
    <property type="entry name" value="Pkinase"/>
    <property type="match status" value="1"/>
</dbReference>
<dbReference type="SMART" id="SM00220">
    <property type="entry name" value="S_TKc"/>
    <property type="match status" value="1"/>
</dbReference>
<dbReference type="SUPFAM" id="SSF56112">
    <property type="entry name" value="Protein kinase-like (PK-like)"/>
    <property type="match status" value="1"/>
</dbReference>
<dbReference type="PROSITE" id="PS00107">
    <property type="entry name" value="PROTEIN_KINASE_ATP"/>
    <property type="match status" value="1"/>
</dbReference>
<dbReference type="PROSITE" id="PS50011">
    <property type="entry name" value="PROTEIN_KINASE_DOM"/>
    <property type="match status" value="1"/>
</dbReference>
<keyword id="KW-0067">ATP-binding</keyword>
<keyword id="KW-0418">Kinase</keyword>
<keyword id="KW-0547">Nucleotide-binding</keyword>
<keyword id="KW-1185">Reference proteome</keyword>
<keyword id="KW-0723">Serine/threonine-protein kinase</keyword>
<keyword id="KW-0808">Transferase</keyword>
<feature type="chain" id="PRO_0000171244" description="Serine/threonine-protein kinase F">
    <location>
        <begin position="1"/>
        <end position="495"/>
    </location>
</feature>
<feature type="domain" description="Protein kinase" evidence="1">
    <location>
        <begin position="46"/>
        <end position="314"/>
    </location>
</feature>
<feature type="region of interest" description="Disordered" evidence="2">
    <location>
        <begin position="316"/>
        <end position="354"/>
    </location>
</feature>
<feature type="compositionally biased region" description="Polar residues" evidence="2">
    <location>
        <begin position="329"/>
        <end position="350"/>
    </location>
</feature>
<feature type="active site" description="Proton acceptor" evidence="1">
    <location>
        <position position="187"/>
    </location>
</feature>
<feature type="binding site" evidence="1">
    <location>
        <begin position="52"/>
        <end position="60"/>
    </location>
    <ligand>
        <name>ATP</name>
        <dbReference type="ChEBI" id="CHEBI:30616"/>
    </ligand>
</feature>
<feature type="binding site" evidence="1">
    <location>
        <position position="77"/>
    </location>
    <ligand>
        <name>ATP</name>
        <dbReference type="ChEBI" id="CHEBI:30616"/>
    </ligand>
</feature>
<sequence length="495" mass="53873">MDLLCTRPGCARLNSFPDLDNRNTLQTVQQRFCTSCRMPLILAGRYLPVKLLGQGGFGAAYLALDRFTPTMRFCVVKQFQPSGNLNQEQLDLALSLFEREAVVLEKLGNRHDQIPDLFAYFPLLVDDPRTGKQDQFFYLVQEFINGQDLEKTVEKHGPLSEAEVRWVLTEMLKILSFVHGTGAIHRDIKPSNLMRDQEGKLYLLDFGAVKQATAGVGASNEGSTGIYSMGFAPPEQMAGNQVYPATDLYALAVTCLYLLTGKTAQDLYDAYHNQWNWRSPGLKVSQPLADVIDRLLLPTPKDRYASAEEVLAVLNGGKGNQGKAPPGATVSTPQGTNTQIQPTPASSASPLTAPKTPGKISQAVQNLPVLKVLFQGALTGSALVFWGIIAVSLFPQTNISLGILGMVVAGIILAQFKRWLEVTEMLSLNTLTILALLAVPGLSRWPKIVELATQLDFPVLVTVIIAAIAGAIAVVATIALFLLILKLLFAVLTRV</sequence>
<proteinExistence type="evidence at protein level"/>
<organism>
    <name type="scientific">Synechocystis sp. (strain ATCC 27184 / PCC 6803 / Kazusa)</name>
    <dbReference type="NCBI Taxonomy" id="1111708"/>
    <lineage>
        <taxon>Bacteria</taxon>
        <taxon>Bacillati</taxon>
        <taxon>Cyanobacteriota</taxon>
        <taxon>Cyanophyceae</taxon>
        <taxon>Synechococcales</taxon>
        <taxon>Merismopediaceae</taxon>
        <taxon>Synechocystis</taxon>
    </lineage>
</organism>
<reference key="1">
    <citation type="journal article" date="2002" name="DNA Res.">
        <title>Biochemical examination of the potential eukaryotic-type protein kinase genes in the complete genome of the unicellular Cyanobacterium synechocystis sp. PCC 6803.</title>
        <authorList>
            <person name="Kamei A."/>
            <person name="Yuasa T."/>
            <person name="Geng X."/>
            <person name="Ikeuchi M."/>
        </authorList>
    </citation>
    <scope>NUCLEOTIDE SEQUENCE [GENOMIC DNA]</scope>
    <scope>CHARACTERIZATION</scope>
</reference>
<reference key="2">
    <citation type="journal article" date="1996" name="DNA Res.">
        <title>Sequence analysis of the genome of the unicellular cyanobacterium Synechocystis sp. strain PCC6803. II. Sequence determination of the entire genome and assignment of potential protein-coding regions.</title>
        <authorList>
            <person name="Kaneko T."/>
            <person name="Sato S."/>
            <person name="Kotani H."/>
            <person name="Tanaka A."/>
            <person name="Asamizu E."/>
            <person name="Nakamura Y."/>
            <person name="Miyajima N."/>
            <person name="Hirosawa M."/>
            <person name="Sugiura M."/>
            <person name="Sasamoto S."/>
            <person name="Kimura T."/>
            <person name="Hosouchi T."/>
            <person name="Matsuno A."/>
            <person name="Muraki A."/>
            <person name="Nakazaki N."/>
            <person name="Naruo K."/>
            <person name="Okumura S."/>
            <person name="Shimpo S."/>
            <person name="Takeuchi C."/>
            <person name="Wada T."/>
            <person name="Watanabe A."/>
            <person name="Yamada M."/>
            <person name="Yasuda M."/>
            <person name="Tabata S."/>
        </authorList>
    </citation>
    <scope>NUCLEOTIDE SEQUENCE [LARGE SCALE GENOMIC DNA]</scope>
    <source>
        <strain>ATCC 27184 / PCC 6803 / Kazusa</strain>
    </source>
</reference>
<gene>
    <name type="primary">spkF</name>
    <name type="ordered locus">slr1225</name>
</gene>